<gene>
    <name evidence="1" type="primary">mnmG</name>
    <name evidence="1" type="synonym">gidA</name>
    <name type="ordered locus">mma_3639</name>
</gene>
<comment type="function">
    <text evidence="1">NAD-binding protein involved in the addition of a carboxymethylaminomethyl (cmnm) group at the wobble position (U34) of certain tRNAs, forming tRNA-cmnm(5)s(2)U34.</text>
</comment>
<comment type="cofactor">
    <cofactor evidence="1">
        <name>FAD</name>
        <dbReference type="ChEBI" id="CHEBI:57692"/>
    </cofactor>
</comment>
<comment type="subunit">
    <text evidence="1">Homodimer. Heterotetramer of two MnmE and two MnmG subunits.</text>
</comment>
<comment type="subcellular location">
    <subcellularLocation>
        <location evidence="1">Cytoplasm</location>
    </subcellularLocation>
</comment>
<comment type="similarity">
    <text evidence="1">Belongs to the MnmG family.</text>
</comment>
<protein>
    <recommendedName>
        <fullName evidence="1">tRNA uridine 5-carboxymethylaminomethyl modification enzyme MnmG</fullName>
    </recommendedName>
    <alternativeName>
        <fullName evidence="1">Glucose-inhibited division protein A</fullName>
    </alternativeName>
</protein>
<evidence type="ECO:0000255" key="1">
    <source>
        <dbReference type="HAMAP-Rule" id="MF_00129"/>
    </source>
</evidence>
<proteinExistence type="inferred from homology"/>
<reference key="1">
    <citation type="journal article" date="2007" name="PLoS Genet.">
        <title>Genome analysis of Minibacterium massiliensis highlights the convergent evolution of water-living bacteria.</title>
        <authorList>
            <person name="Audic S."/>
            <person name="Robert C."/>
            <person name="Campagna B."/>
            <person name="Parinello H."/>
            <person name="Claverie J.-M."/>
            <person name="Raoult D."/>
            <person name="Drancourt M."/>
        </authorList>
    </citation>
    <scope>NUCLEOTIDE SEQUENCE [LARGE SCALE GENOMIC DNA]</scope>
    <source>
        <strain>Marseille</strain>
    </source>
</reference>
<keyword id="KW-0963">Cytoplasm</keyword>
<keyword id="KW-0274">FAD</keyword>
<keyword id="KW-0285">Flavoprotein</keyword>
<keyword id="KW-0520">NAD</keyword>
<keyword id="KW-0819">tRNA processing</keyword>
<feature type="chain" id="PRO_1000016611" description="tRNA uridine 5-carboxymethylaminomethyl modification enzyme MnmG">
    <location>
        <begin position="1"/>
        <end position="645"/>
    </location>
</feature>
<feature type="binding site" evidence="1">
    <location>
        <begin position="13"/>
        <end position="18"/>
    </location>
    <ligand>
        <name>FAD</name>
        <dbReference type="ChEBI" id="CHEBI:57692"/>
    </ligand>
</feature>
<feature type="binding site" evidence="1">
    <location>
        <begin position="274"/>
        <end position="288"/>
    </location>
    <ligand>
        <name>NAD(+)</name>
        <dbReference type="ChEBI" id="CHEBI:57540"/>
    </ligand>
</feature>
<sequence>MIFPTKFDVIVVGGGHAGTEAALASARMGQSTLLLSHNIETLGQMSCNPSIGGIGKGHLVKEVDAMGGAMAIATDEAGIQFRILNSSKGPAVRATRAQADRILYKQAIRSRLENQPNLWLFQQAVDDLLVEGDRVIGAVTQVGIKFYARAVVLTAGTFLDGKIHVGLNNYSAGRAGDPPAISLSARLKELKLPQGRLKTGTPPRIDGRSIDFSVMQEQPGDLDPIPVFSVMGSVAMHPKQMPCWITHTNEKTHDLIRSGLDRSPMYTGVIEGVGPRYCPSIEDKIHRFAGKDSHQIFLEPEGLTTNEFYPNGISTSLPFDIQLALVQSMRGLEHAHILRPGYAIEYDYFDPRGLKSTLETKVIQGLFFAGQINGTTGYEEAAAQGMLAGINAALQTQERDAWTPRRDEAYLGVMVDDLITKGVLEPYRMFTSRAEYRLSLREDNADMRLTEIGRQLGCVGDAQWAVFETKREAVARELERLRSTWVSPRILAEAEAERVLGKGIEREYALADLLRRPNVSYETLMSLKGVDGQDLAGPGVAEDAVREQVEIQLKYAGYIDRQAKEVERHDYYENLKLPQEFDYMEVKGLSFEVRQKLCKHKPETLGQASRISGVTPAAISLLLVHLKKGGFKEFAALPPTSEAAA</sequence>
<accession>A6T482</accession>
<dbReference type="EMBL" id="CP000269">
    <property type="protein sequence ID" value="ABR89240.1"/>
    <property type="molecule type" value="Genomic_DNA"/>
</dbReference>
<dbReference type="RefSeq" id="WP_012081474.1">
    <property type="nucleotide sequence ID" value="NC_009659.1"/>
</dbReference>
<dbReference type="SMR" id="A6T482"/>
<dbReference type="STRING" id="375286.mma_3639"/>
<dbReference type="KEGG" id="mms:mma_3639"/>
<dbReference type="eggNOG" id="COG0445">
    <property type="taxonomic scope" value="Bacteria"/>
</dbReference>
<dbReference type="HOGENOM" id="CLU_007831_2_2_4"/>
<dbReference type="OrthoDB" id="9815560at2"/>
<dbReference type="Proteomes" id="UP000006388">
    <property type="component" value="Chromosome"/>
</dbReference>
<dbReference type="GO" id="GO:0005829">
    <property type="term" value="C:cytosol"/>
    <property type="evidence" value="ECO:0007669"/>
    <property type="project" value="TreeGrafter"/>
</dbReference>
<dbReference type="GO" id="GO:0050660">
    <property type="term" value="F:flavin adenine dinucleotide binding"/>
    <property type="evidence" value="ECO:0007669"/>
    <property type="project" value="UniProtKB-UniRule"/>
</dbReference>
<dbReference type="GO" id="GO:0030488">
    <property type="term" value="P:tRNA methylation"/>
    <property type="evidence" value="ECO:0007669"/>
    <property type="project" value="TreeGrafter"/>
</dbReference>
<dbReference type="GO" id="GO:0002098">
    <property type="term" value="P:tRNA wobble uridine modification"/>
    <property type="evidence" value="ECO:0007669"/>
    <property type="project" value="InterPro"/>
</dbReference>
<dbReference type="FunFam" id="1.10.10.1800:FF:000001">
    <property type="entry name" value="tRNA uridine 5-carboxymethylaminomethyl modification enzyme MnmG"/>
    <property type="match status" value="1"/>
</dbReference>
<dbReference type="FunFam" id="1.10.150.570:FF:000001">
    <property type="entry name" value="tRNA uridine 5-carboxymethylaminomethyl modification enzyme MnmG"/>
    <property type="match status" value="1"/>
</dbReference>
<dbReference type="FunFam" id="3.50.50.60:FF:000002">
    <property type="entry name" value="tRNA uridine 5-carboxymethylaminomethyl modification enzyme MnmG"/>
    <property type="match status" value="1"/>
</dbReference>
<dbReference type="FunFam" id="3.50.50.60:FF:000010">
    <property type="entry name" value="tRNA uridine 5-carboxymethylaminomethyl modification enzyme MnmG"/>
    <property type="match status" value="1"/>
</dbReference>
<dbReference type="Gene3D" id="3.50.50.60">
    <property type="entry name" value="FAD/NAD(P)-binding domain"/>
    <property type="match status" value="2"/>
</dbReference>
<dbReference type="Gene3D" id="1.10.150.570">
    <property type="entry name" value="GidA associated domain, C-terminal subdomain"/>
    <property type="match status" value="1"/>
</dbReference>
<dbReference type="Gene3D" id="1.10.10.1800">
    <property type="entry name" value="tRNA uridine 5-carboxymethylaminomethyl modification enzyme MnmG/GidA"/>
    <property type="match status" value="1"/>
</dbReference>
<dbReference type="HAMAP" id="MF_00129">
    <property type="entry name" value="MnmG_GidA"/>
    <property type="match status" value="1"/>
</dbReference>
<dbReference type="InterPro" id="IPR036188">
    <property type="entry name" value="FAD/NAD-bd_sf"/>
</dbReference>
<dbReference type="InterPro" id="IPR049312">
    <property type="entry name" value="GIDA_C_N"/>
</dbReference>
<dbReference type="InterPro" id="IPR004416">
    <property type="entry name" value="MnmG"/>
</dbReference>
<dbReference type="InterPro" id="IPR002218">
    <property type="entry name" value="MnmG-rel"/>
</dbReference>
<dbReference type="InterPro" id="IPR020595">
    <property type="entry name" value="MnmG-rel_CS"/>
</dbReference>
<dbReference type="InterPro" id="IPR026904">
    <property type="entry name" value="MnmG_C"/>
</dbReference>
<dbReference type="InterPro" id="IPR047001">
    <property type="entry name" value="MnmG_C_subdom"/>
</dbReference>
<dbReference type="InterPro" id="IPR044920">
    <property type="entry name" value="MnmG_C_subdom_sf"/>
</dbReference>
<dbReference type="InterPro" id="IPR040131">
    <property type="entry name" value="MnmG_N"/>
</dbReference>
<dbReference type="NCBIfam" id="TIGR00136">
    <property type="entry name" value="mnmG_gidA"/>
    <property type="match status" value="1"/>
</dbReference>
<dbReference type="PANTHER" id="PTHR11806">
    <property type="entry name" value="GLUCOSE INHIBITED DIVISION PROTEIN A"/>
    <property type="match status" value="1"/>
</dbReference>
<dbReference type="PANTHER" id="PTHR11806:SF0">
    <property type="entry name" value="PROTEIN MTO1 HOMOLOG, MITOCHONDRIAL"/>
    <property type="match status" value="1"/>
</dbReference>
<dbReference type="Pfam" id="PF01134">
    <property type="entry name" value="GIDA"/>
    <property type="match status" value="1"/>
</dbReference>
<dbReference type="Pfam" id="PF21680">
    <property type="entry name" value="GIDA_C_1st"/>
    <property type="match status" value="1"/>
</dbReference>
<dbReference type="Pfam" id="PF13932">
    <property type="entry name" value="SAM_GIDA_C"/>
    <property type="match status" value="1"/>
</dbReference>
<dbReference type="SMART" id="SM01228">
    <property type="entry name" value="GIDA_assoc_3"/>
    <property type="match status" value="1"/>
</dbReference>
<dbReference type="SUPFAM" id="SSF51905">
    <property type="entry name" value="FAD/NAD(P)-binding domain"/>
    <property type="match status" value="1"/>
</dbReference>
<dbReference type="PROSITE" id="PS01280">
    <property type="entry name" value="GIDA_1"/>
    <property type="match status" value="1"/>
</dbReference>
<dbReference type="PROSITE" id="PS01281">
    <property type="entry name" value="GIDA_2"/>
    <property type="match status" value="1"/>
</dbReference>
<name>MNMG_JANMA</name>
<organism>
    <name type="scientific">Janthinobacterium sp. (strain Marseille)</name>
    <name type="common">Minibacterium massiliensis</name>
    <dbReference type="NCBI Taxonomy" id="375286"/>
    <lineage>
        <taxon>Bacteria</taxon>
        <taxon>Pseudomonadati</taxon>
        <taxon>Pseudomonadota</taxon>
        <taxon>Betaproteobacteria</taxon>
        <taxon>Burkholderiales</taxon>
        <taxon>Oxalobacteraceae</taxon>
        <taxon>Janthinobacterium</taxon>
    </lineage>
</organism>